<protein>
    <recommendedName>
        <fullName>DNA polymerase I, thermostable</fullName>
        <ecNumber evidence="2">2.7.7.7</ecNumber>
    </recommendedName>
    <alternativeName>
        <fullName>TFI polymerase 1</fullName>
    </alternativeName>
</protein>
<comment type="function">
    <text evidence="2 5">In addition to polymerase activity, this DNA polymerase exhibits 5'-3' exonuclease activity (By similarity). Unlikely to have 3'-5' exonuclease activity due to absence of a 3'-5' exonuclease domain (Probable).</text>
</comment>
<comment type="catalytic activity">
    <reaction evidence="2">
        <text>DNA(n) + a 2'-deoxyribonucleoside 5'-triphosphate = DNA(n+1) + diphosphate</text>
        <dbReference type="Rhea" id="RHEA:22508"/>
        <dbReference type="Rhea" id="RHEA-COMP:17339"/>
        <dbReference type="Rhea" id="RHEA-COMP:17340"/>
        <dbReference type="ChEBI" id="CHEBI:33019"/>
        <dbReference type="ChEBI" id="CHEBI:61560"/>
        <dbReference type="ChEBI" id="CHEBI:173112"/>
        <dbReference type="EC" id="2.7.7.7"/>
    </reaction>
</comment>
<comment type="similarity">
    <text evidence="4">Belongs to the DNA polymerase type-A family.</text>
</comment>
<accession>O52225</accession>
<evidence type="ECO:0000250" key="1"/>
<evidence type="ECO:0000250" key="2">
    <source>
        <dbReference type="UniProtKB" id="P52026"/>
    </source>
</evidence>
<evidence type="ECO:0000255" key="3"/>
<evidence type="ECO:0000305" key="4"/>
<evidence type="ECO:0000305" key="5">
    <source>
    </source>
</evidence>
<reference key="1">
    <citation type="journal article" date="1997" name="Mol. Cells">
        <title>Cloning and analysis of the DNA polymerase-encoding gene from Thermus filiformis.</title>
        <authorList>
            <person name="Jung S.E."/>
            <person name="Choi J.J."/>
            <person name="Kim H.K."/>
            <person name="Kwon S.-T."/>
        </authorList>
    </citation>
    <scope>NUCLEOTIDE SEQUENCE [GENOMIC DNA]</scope>
</reference>
<name>DPO1_THEFI</name>
<feature type="chain" id="PRO_0000101260" description="DNA polymerase I, thermostable">
    <location>
        <begin position="1"/>
        <end position="833"/>
    </location>
</feature>
<feature type="domain" description="5'-3' exonuclease" evidence="3">
    <location>
        <begin position="173"/>
        <end position="267"/>
    </location>
</feature>
<feature type="region of interest" description="Polymerase" evidence="1">
    <location>
        <begin position="412"/>
        <end position="833"/>
    </location>
</feature>
<gene>
    <name type="primary">polA</name>
    <name type="synonym">pol</name>
</gene>
<keyword id="KW-0227">DNA damage</keyword>
<keyword id="KW-0234">DNA repair</keyword>
<keyword id="KW-0235">DNA replication</keyword>
<keyword id="KW-0238">DNA-binding</keyword>
<keyword id="KW-0239">DNA-directed DNA polymerase</keyword>
<keyword id="KW-0548">Nucleotidyltransferase</keyword>
<keyword id="KW-0808">Transferase</keyword>
<organism>
    <name type="scientific">Thermus filiformis</name>
    <dbReference type="NCBI Taxonomy" id="276"/>
    <lineage>
        <taxon>Bacteria</taxon>
        <taxon>Thermotogati</taxon>
        <taxon>Deinococcota</taxon>
        <taxon>Deinococci</taxon>
        <taxon>Thermales</taxon>
        <taxon>Thermaceae</taxon>
        <taxon>Thermus</taxon>
    </lineage>
</organism>
<proteinExistence type="inferred from homology"/>
<sequence>MTPLFDLEEPPKRVLLVDGHHLAYRTFYALSLTTSRGEPVQMVYGFARSLLKALKEDGQAVVVVFDAKAPSFRHEAYEAYKAGRAPTPEDFPRQLALVKRLVDLLGLVRLEAPGYEADDVLGTLAKKAEREGMEVRILTGDRDFFQLLSEKVSVLLPDGTLVTPKDVQEKYGVPPERWVDFRALTGDRSDNIPGVAGIGEKTALRLLAEWGSVENLLKNLDRVKPDSLRRKIEAHLEDLHLSLDLARIRTDLPLEVDFKALRRRTPDLEGLRAFLEELEFGSLLHEFGLLGGEKPREEAPWPPPEGAFVGFLLSRKEPMWAELLALAAASEGRVHRATSPVEALADLKEARGFLAKDLAVLALREGVALDPTDDPLLVAYLLDPANTHPEGVARRYGGEFTEDAAERALLSERLFQNLFPRLSEKLLWLYQEVERPLSRVLAHMEARGVRLDVPLLEALSFELEKEMERLEGEVFRLAGHPFNLNSRDQLERVLFDELGLTPVGRTEKTGKRSTAQGALEALRGAHPIVELILQYRELSKLKSTYLDPLPRLVHPRTGRLHTRFNQTATATGRLSSSDPNLQNIPVRTPLGQRIRKAFVAEEGWLLLAADYSQIELRVLAHLSGDENLKRVFREGKDIHTETAAWMFGLDPALVDPKMRRAAKTVNFGVLYGMSAHRLSQELGIDYKEAEAFIERYFQSFPKVRAWIERTLEEGRTRGYVETLFGRRRYVPDLASRVRSVREAAERMAFNMPVQGTAADLMKIAMVKLFPRLKPLGAHLLLQVHDELVLEVPEDRAEEAKALVKEVMENAYPLDVPLEVEVGVGRDWLEAKQD</sequence>
<dbReference type="EC" id="2.7.7.7" evidence="2"/>
<dbReference type="EMBL" id="AF030320">
    <property type="protein sequence ID" value="AAC46079.1"/>
    <property type="molecule type" value="Genomic_DNA"/>
</dbReference>
<dbReference type="RefSeq" id="WP_038067428.1">
    <property type="nucleotide sequence ID" value="NZ_JPSL02000039.1"/>
</dbReference>
<dbReference type="SMR" id="O52225"/>
<dbReference type="STRING" id="276.THFILI_06865"/>
<dbReference type="OrthoDB" id="9806424at2"/>
<dbReference type="GO" id="GO:0008409">
    <property type="term" value="F:5'-3' exonuclease activity"/>
    <property type="evidence" value="ECO:0007669"/>
    <property type="project" value="InterPro"/>
</dbReference>
<dbReference type="GO" id="GO:0003677">
    <property type="term" value="F:DNA binding"/>
    <property type="evidence" value="ECO:0007669"/>
    <property type="project" value="UniProtKB-KW"/>
</dbReference>
<dbReference type="GO" id="GO:0003887">
    <property type="term" value="F:DNA-directed DNA polymerase activity"/>
    <property type="evidence" value="ECO:0007669"/>
    <property type="project" value="UniProtKB-KW"/>
</dbReference>
<dbReference type="GO" id="GO:0001882">
    <property type="term" value="F:nucleoside binding"/>
    <property type="evidence" value="ECO:0007669"/>
    <property type="project" value="InterPro"/>
</dbReference>
<dbReference type="GO" id="GO:0006261">
    <property type="term" value="P:DNA-templated DNA replication"/>
    <property type="evidence" value="ECO:0007669"/>
    <property type="project" value="InterPro"/>
</dbReference>
<dbReference type="GO" id="GO:0006302">
    <property type="term" value="P:double-strand break repair"/>
    <property type="evidence" value="ECO:0007669"/>
    <property type="project" value="TreeGrafter"/>
</dbReference>
<dbReference type="CDD" id="cd08637">
    <property type="entry name" value="DNA_pol_A_pol_I_C"/>
    <property type="match status" value="1"/>
</dbReference>
<dbReference type="CDD" id="cd09898">
    <property type="entry name" value="H3TH_53EXO"/>
    <property type="match status" value="1"/>
</dbReference>
<dbReference type="CDD" id="cd09859">
    <property type="entry name" value="PIN_53EXO"/>
    <property type="match status" value="1"/>
</dbReference>
<dbReference type="FunFam" id="1.10.150.20:FF:000002">
    <property type="entry name" value="DNA polymerase I"/>
    <property type="match status" value="1"/>
</dbReference>
<dbReference type="FunFam" id="1.10.150.20:FF:000003">
    <property type="entry name" value="DNA polymerase I"/>
    <property type="match status" value="1"/>
</dbReference>
<dbReference type="FunFam" id="1.20.1060.10:FF:000001">
    <property type="entry name" value="DNA polymerase I"/>
    <property type="match status" value="1"/>
</dbReference>
<dbReference type="Gene3D" id="3.30.70.370">
    <property type="match status" value="1"/>
</dbReference>
<dbReference type="Gene3D" id="1.10.150.20">
    <property type="entry name" value="5' to 3' exonuclease, C-terminal subdomain"/>
    <property type="match status" value="2"/>
</dbReference>
<dbReference type="Gene3D" id="3.40.50.1010">
    <property type="entry name" value="5'-nuclease"/>
    <property type="match status" value="1"/>
</dbReference>
<dbReference type="Gene3D" id="3.30.420.10">
    <property type="entry name" value="Ribonuclease H-like superfamily/Ribonuclease H"/>
    <property type="match status" value="1"/>
</dbReference>
<dbReference type="Gene3D" id="1.20.1060.10">
    <property type="entry name" value="Taq DNA Polymerase, Chain T, domain 4"/>
    <property type="match status" value="1"/>
</dbReference>
<dbReference type="InterPro" id="IPR020046">
    <property type="entry name" value="5-3_exonucl_a-hlix_arch_N"/>
</dbReference>
<dbReference type="InterPro" id="IPR002421">
    <property type="entry name" value="5-3_exonuclease"/>
</dbReference>
<dbReference type="InterPro" id="IPR036279">
    <property type="entry name" value="5-3_exonuclease_C_sf"/>
</dbReference>
<dbReference type="InterPro" id="IPR019760">
    <property type="entry name" value="DNA-dir_DNA_pol_A_CS"/>
</dbReference>
<dbReference type="InterPro" id="IPR001098">
    <property type="entry name" value="DNA-dir_DNA_pol_A_palm_dom"/>
</dbReference>
<dbReference type="InterPro" id="IPR043502">
    <property type="entry name" value="DNA/RNA_pol_sf"/>
</dbReference>
<dbReference type="InterPro" id="IPR020045">
    <property type="entry name" value="DNA_polI_H3TH"/>
</dbReference>
<dbReference type="InterPro" id="IPR018320">
    <property type="entry name" value="DNA_polymerase_1"/>
</dbReference>
<dbReference type="InterPro" id="IPR002298">
    <property type="entry name" value="DNA_polymerase_A"/>
</dbReference>
<dbReference type="InterPro" id="IPR008918">
    <property type="entry name" value="HhH2"/>
</dbReference>
<dbReference type="InterPro" id="IPR029060">
    <property type="entry name" value="PIN-like_dom_sf"/>
</dbReference>
<dbReference type="InterPro" id="IPR012337">
    <property type="entry name" value="RNaseH-like_sf"/>
</dbReference>
<dbReference type="InterPro" id="IPR036397">
    <property type="entry name" value="RNaseH_sf"/>
</dbReference>
<dbReference type="InterPro" id="IPR015361">
    <property type="entry name" value="Taq_pol_thermo_exonuc"/>
</dbReference>
<dbReference type="NCBIfam" id="TIGR00593">
    <property type="entry name" value="pola"/>
    <property type="match status" value="1"/>
</dbReference>
<dbReference type="PANTHER" id="PTHR10133">
    <property type="entry name" value="DNA POLYMERASE I"/>
    <property type="match status" value="1"/>
</dbReference>
<dbReference type="PANTHER" id="PTHR10133:SF27">
    <property type="entry name" value="DNA POLYMERASE NU"/>
    <property type="match status" value="1"/>
</dbReference>
<dbReference type="Pfam" id="PF01367">
    <property type="entry name" value="5_3_exonuc"/>
    <property type="match status" value="1"/>
</dbReference>
<dbReference type="Pfam" id="PF02739">
    <property type="entry name" value="5_3_exonuc_N"/>
    <property type="match status" value="1"/>
</dbReference>
<dbReference type="Pfam" id="PF00476">
    <property type="entry name" value="DNA_pol_A"/>
    <property type="match status" value="1"/>
</dbReference>
<dbReference type="Pfam" id="PF09281">
    <property type="entry name" value="Taq-exonuc"/>
    <property type="match status" value="1"/>
</dbReference>
<dbReference type="PRINTS" id="PR00868">
    <property type="entry name" value="DNAPOLI"/>
</dbReference>
<dbReference type="SMART" id="SM00475">
    <property type="entry name" value="53EXOc"/>
    <property type="match status" value="1"/>
</dbReference>
<dbReference type="SMART" id="SM00279">
    <property type="entry name" value="HhH2"/>
    <property type="match status" value="1"/>
</dbReference>
<dbReference type="SMART" id="SM00482">
    <property type="entry name" value="POLAc"/>
    <property type="match status" value="1"/>
</dbReference>
<dbReference type="SUPFAM" id="SSF47807">
    <property type="entry name" value="5' to 3' exonuclease, C-terminal subdomain"/>
    <property type="match status" value="1"/>
</dbReference>
<dbReference type="SUPFAM" id="SSF56672">
    <property type="entry name" value="DNA/RNA polymerases"/>
    <property type="match status" value="1"/>
</dbReference>
<dbReference type="SUPFAM" id="SSF88723">
    <property type="entry name" value="PIN domain-like"/>
    <property type="match status" value="1"/>
</dbReference>
<dbReference type="SUPFAM" id="SSF53098">
    <property type="entry name" value="Ribonuclease H-like"/>
    <property type="match status" value="1"/>
</dbReference>
<dbReference type="PROSITE" id="PS00447">
    <property type="entry name" value="DNA_POLYMERASE_A"/>
    <property type="match status" value="1"/>
</dbReference>